<comment type="function">
    <text evidence="1">Catalyzes the excretion of spermidine.</text>
</comment>
<comment type="subunit">
    <text evidence="1">Forms a complex with MdtI.</text>
</comment>
<comment type="subcellular location">
    <subcellularLocation>
        <location evidence="1">Cell inner membrane</location>
        <topology evidence="1">Multi-pass membrane protein</topology>
    </subcellularLocation>
</comment>
<comment type="similarity">
    <text evidence="1">Belongs to the drug/metabolite transporter (DMT) superfamily. Small multidrug resistance (SMR) (TC 2.A.7.1) family. MdtJ subfamily.</text>
</comment>
<organism>
    <name type="scientific">Serratia proteamaculans (strain 568)</name>
    <dbReference type="NCBI Taxonomy" id="399741"/>
    <lineage>
        <taxon>Bacteria</taxon>
        <taxon>Pseudomonadati</taxon>
        <taxon>Pseudomonadota</taxon>
        <taxon>Gammaproteobacteria</taxon>
        <taxon>Enterobacterales</taxon>
        <taxon>Yersiniaceae</taxon>
        <taxon>Serratia</taxon>
    </lineage>
</organism>
<accession>A8GFH7</accession>
<dbReference type="EMBL" id="CP000826">
    <property type="protein sequence ID" value="ABV41867.1"/>
    <property type="molecule type" value="Genomic_DNA"/>
</dbReference>
<dbReference type="SMR" id="A8GFH7"/>
<dbReference type="STRING" id="399741.Spro_2766"/>
<dbReference type="KEGG" id="spe:Spro_2766"/>
<dbReference type="eggNOG" id="COG2076">
    <property type="taxonomic scope" value="Bacteria"/>
</dbReference>
<dbReference type="HOGENOM" id="CLU_133067_0_0_6"/>
<dbReference type="OrthoDB" id="9808638at2"/>
<dbReference type="GO" id="GO:0005886">
    <property type="term" value="C:plasma membrane"/>
    <property type="evidence" value="ECO:0007669"/>
    <property type="project" value="UniProtKB-SubCell"/>
</dbReference>
<dbReference type="GO" id="GO:0015199">
    <property type="term" value="F:amino-acid betaine transmembrane transporter activity"/>
    <property type="evidence" value="ECO:0007669"/>
    <property type="project" value="TreeGrafter"/>
</dbReference>
<dbReference type="GO" id="GO:0015297">
    <property type="term" value="F:antiporter activity"/>
    <property type="evidence" value="ECO:0007669"/>
    <property type="project" value="TreeGrafter"/>
</dbReference>
<dbReference type="GO" id="GO:0015220">
    <property type="term" value="F:choline transmembrane transporter activity"/>
    <property type="evidence" value="ECO:0007669"/>
    <property type="project" value="TreeGrafter"/>
</dbReference>
<dbReference type="GO" id="GO:0015606">
    <property type="term" value="F:spermidine transmembrane transporter activity"/>
    <property type="evidence" value="ECO:0007669"/>
    <property type="project" value="UniProtKB-UniRule"/>
</dbReference>
<dbReference type="GO" id="GO:0031460">
    <property type="term" value="P:glycine betaine transport"/>
    <property type="evidence" value="ECO:0007669"/>
    <property type="project" value="TreeGrafter"/>
</dbReference>
<dbReference type="FunFam" id="1.10.3730.20:FF:000001">
    <property type="entry name" value="Quaternary ammonium compound resistance transporter SugE"/>
    <property type="match status" value="1"/>
</dbReference>
<dbReference type="Gene3D" id="1.10.3730.20">
    <property type="match status" value="1"/>
</dbReference>
<dbReference type="HAMAP" id="MF_01598">
    <property type="entry name" value="MdtJ"/>
    <property type="match status" value="1"/>
</dbReference>
<dbReference type="InterPro" id="IPR000390">
    <property type="entry name" value="Small_drug/metabolite_transptr"/>
</dbReference>
<dbReference type="InterPro" id="IPR045324">
    <property type="entry name" value="Small_multidrug_res"/>
</dbReference>
<dbReference type="InterPro" id="IPR023740">
    <property type="entry name" value="Spermidine_export_MdtJ"/>
</dbReference>
<dbReference type="NCBIfam" id="NF007767">
    <property type="entry name" value="PRK10452.1"/>
    <property type="match status" value="1"/>
</dbReference>
<dbReference type="PANTHER" id="PTHR30561">
    <property type="entry name" value="SMR FAMILY PROTON-DEPENDENT DRUG EFFLUX TRANSPORTER SUGE"/>
    <property type="match status" value="1"/>
</dbReference>
<dbReference type="PANTHER" id="PTHR30561:SF2">
    <property type="entry name" value="SPERMIDINE EXPORT PROTEIN MDTJ"/>
    <property type="match status" value="1"/>
</dbReference>
<dbReference type="Pfam" id="PF00893">
    <property type="entry name" value="Multi_Drug_Res"/>
    <property type="match status" value="1"/>
</dbReference>
<dbReference type="SUPFAM" id="SSF103481">
    <property type="entry name" value="Multidrug resistance efflux transporter EmrE"/>
    <property type="match status" value="1"/>
</dbReference>
<protein>
    <recommendedName>
        <fullName evidence="1">Spermidine export protein MdtJ</fullName>
    </recommendedName>
</protein>
<proteinExistence type="inferred from homology"/>
<keyword id="KW-0997">Cell inner membrane</keyword>
<keyword id="KW-1003">Cell membrane</keyword>
<keyword id="KW-0472">Membrane</keyword>
<keyword id="KW-0812">Transmembrane</keyword>
<keyword id="KW-1133">Transmembrane helix</keyword>
<keyword id="KW-0813">Transport</keyword>
<name>MDTJ_SERP5</name>
<feature type="chain" id="PRO_0000331179" description="Spermidine export protein MdtJ">
    <location>
        <begin position="1"/>
        <end position="122"/>
    </location>
</feature>
<feature type="transmembrane region" description="Helical" evidence="1">
    <location>
        <begin position="1"/>
        <end position="21"/>
    </location>
</feature>
<feature type="transmembrane region" description="Helical" evidence="1">
    <location>
        <begin position="31"/>
        <end position="51"/>
    </location>
</feature>
<feature type="transmembrane region" description="Helical" evidence="1">
    <location>
        <begin position="54"/>
        <end position="74"/>
    </location>
</feature>
<feature type="transmembrane region" description="Helical" evidence="1">
    <location>
        <begin position="81"/>
        <end position="101"/>
    </location>
</feature>
<sequence>MIYWIFLGLAIATEIIGTLSMKYASISGGMTGHIVMYVMITASYVMLSMAVKRVALGVAYALWEGIGILFITLFSVLWFDEPISALKVLGLVTLIVGIMLVKSGTRKPRKQVTPRGDNHATA</sequence>
<gene>
    <name evidence="1" type="primary">mdtJ</name>
    <name type="ordered locus">Spro_2766</name>
</gene>
<evidence type="ECO:0000255" key="1">
    <source>
        <dbReference type="HAMAP-Rule" id="MF_01598"/>
    </source>
</evidence>
<reference key="1">
    <citation type="submission" date="2007-09" db="EMBL/GenBank/DDBJ databases">
        <title>Complete sequence of chromosome of Serratia proteamaculans 568.</title>
        <authorList>
            <consortium name="US DOE Joint Genome Institute"/>
            <person name="Copeland A."/>
            <person name="Lucas S."/>
            <person name="Lapidus A."/>
            <person name="Barry K."/>
            <person name="Glavina del Rio T."/>
            <person name="Dalin E."/>
            <person name="Tice H."/>
            <person name="Pitluck S."/>
            <person name="Chain P."/>
            <person name="Malfatti S."/>
            <person name="Shin M."/>
            <person name="Vergez L."/>
            <person name="Schmutz J."/>
            <person name="Larimer F."/>
            <person name="Land M."/>
            <person name="Hauser L."/>
            <person name="Kyrpides N."/>
            <person name="Kim E."/>
            <person name="Taghavi S."/>
            <person name="Newman L."/>
            <person name="Vangronsveld J."/>
            <person name="van der Lelie D."/>
            <person name="Richardson P."/>
        </authorList>
    </citation>
    <scope>NUCLEOTIDE SEQUENCE [LARGE SCALE GENOMIC DNA]</scope>
    <source>
        <strain>568</strain>
    </source>
</reference>